<keyword id="KW-0963">Cytoplasm</keyword>
<keyword id="KW-0251">Elongation factor</keyword>
<keyword id="KW-0342">GTP-binding</keyword>
<keyword id="KW-0488">Methylation</keyword>
<keyword id="KW-0547">Nucleotide-binding</keyword>
<keyword id="KW-0597">Phosphoprotein</keyword>
<keyword id="KW-0648">Protein biosynthesis</keyword>
<organism>
    <name type="scientific">Daucus carota</name>
    <name type="common">Wild carrot</name>
    <dbReference type="NCBI Taxonomy" id="4039"/>
    <lineage>
        <taxon>Eukaryota</taxon>
        <taxon>Viridiplantae</taxon>
        <taxon>Streptophyta</taxon>
        <taxon>Embryophyta</taxon>
        <taxon>Tracheophyta</taxon>
        <taxon>Spermatophyta</taxon>
        <taxon>Magnoliopsida</taxon>
        <taxon>eudicotyledons</taxon>
        <taxon>Gunneridae</taxon>
        <taxon>Pentapetalae</taxon>
        <taxon>asterids</taxon>
        <taxon>campanulids</taxon>
        <taxon>Apiales</taxon>
        <taxon>Apiaceae</taxon>
        <taxon>Apioideae</taxon>
        <taxon>Scandiceae</taxon>
        <taxon>Daucinae</taxon>
        <taxon>Daucus</taxon>
        <taxon>Daucus sect. Daucus</taxon>
    </lineage>
</organism>
<reference key="1">
    <citation type="submission" date="1991-09" db="EMBL/GenBank/DDBJ databases">
        <authorList>
            <person name="Apuya N.R."/>
            <person name="Zimmerman J."/>
        </authorList>
    </citation>
    <scope>NUCLEOTIDE SEQUENCE [GENOMIC DNA]</scope>
    <source>
        <strain>cv. Danvers Half-long</strain>
        <tissue>Callus</tissue>
    </source>
</reference>
<reference key="2">
    <citation type="journal article" date="1998" name="Plant Physiol.">
        <title>Phosphoglycerylethanolamine posttranslational modification of plant eukaryotic elongation factor 1alpha.</title>
        <authorList>
            <person name="Ransom W.D."/>
            <person name="Lao P.C."/>
            <person name="Gage D.A."/>
            <person name="Boss W.F."/>
        </authorList>
    </citation>
    <scope>ETHANOLAMINYLATION AT GLU-289</scope>
    <scope>IDENTIFICATION BY MASS SPECTROMETRY</scope>
</reference>
<name>EF1A1_DAUCA</name>
<protein>
    <recommendedName>
        <fullName>Elongation factor 1-alpha</fullName>
        <shortName>EF-1-alpha</shortName>
    </recommendedName>
</protein>
<comment type="function">
    <text>This protein promotes the GTP-dependent binding of aminoacyl-tRNA to the A-site of ribosomes during protein biosynthesis.</text>
</comment>
<comment type="subcellular location">
    <subcellularLocation>
        <location>Cytoplasm</location>
    </subcellularLocation>
</comment>
<comment type="similarity">
    <text evidence="3">Belongs to the TRAFAC class translation factor GTPase superfamily. Classic translation factor GTPase family. EF-Tu/EF-1A subfamily.</text>
</comment>
<proteinExistence type="evidence at protein level"/>
<evidence type="ECO:0000250" key="1"/>
<evidence type="ECO:0000250" key="2">
    <source>
        <dbReference type="UniProtKB" id="Q8GTY0"/>
    </source>
</evidence>
<evidence type="ECO:0000305" key="3"/>
<evidence type="ECO:0000305" key="4">
    <source>
    </source>
</evidence>
<feature type="chain" id="PRO_0000090933" description="Elongation factor 1-alpha">
    <location>
        <begin position="1"/>
        <end position="449"/>
    </location>
</feature>
<feature type="domain" description="tr-type G">
    <location>
        <begin position="5"/>
        <end position="230"/>
    </location>
</feature>
<feature type="region of interest" description="G1" evidence="1">
    <location>
        <begin position="14"/>
        <end position="21"/>
    </location>
</feature>
<feature type="region of interest" description="G2" evidence="1">
    <location>
        <begin position="70"/>
        <end position="74"/>
    </location>
</feature>
<feature type="region of interest" description="G3" evidence="1">
    <location>
        <begin position="91"/>
        <end position="94"/>
    </location>
</feature>
<feature type="region of interest" description="G4" evidence="1">
    <location>
        <begin position="153"/>
        <end position="156"/>
    </location>
</feature>
<feature type="region of interest" description="G5" evidence="1">
    <location>
        <begin position="194"/>
        <end position="196"/>
    </location>
</feature>
<feature type="binding site" evidence="1">
    <location>
        <begin position="14"/>
        <end position="21"/>
    </location>
    <ligand>
        <name>GTP</name>
        <dbReference type="ChEBI" id="CHEBI:37565"/>
    </ligand>
</feature>
<feature type="binding site" evidence="1">
    <location>
        <begin position="91"/>
        <end position="95"/>
    </location>
    <ligand>
        <name>GTP</name>
        <dbReference type="ChEBI" id="CHEBI:37565"/>
    </ligand>
</feature>
<feature type="binding site" evidence="1">
    <location>
        <begin position="153"/>
        <end position="156"/>
    </location>
    <ligand>
        <name>GTP</name>
        <dbReference type="ChEBI" id="CHEBI:37565"/>
    </ligand>
</feature>
<feature type="modified residue" description="N6,N6-dimethyllysine" evidence="2">
    <location>
        <position position="55"/>
    </location>
</feature>
<feature type="modified residue" description="N6,N6,N6-trimethyllysine" evidence="2">
    <location>
        <position position="79"/>
    </location>
</feature>
<feature type="modified residue" description="N6,N6,N6-trimethyllysine" evidence="2">
    <location>
        <position position="187"/>
    </location>
</feature>
<feature type="modified residue" description="N6-methyllysine" evidence="2">
    <location>
        <position position="261"/>
    </location>
</feature>
<feature type="modified residue" description="5-glutamyl glycerylphosphorylethanolamine" evidence="4">
    <location>
        <position position="289"/>
    </location>
</feature>
<feature type="modified residue" description="N6,N6,N6-trimethyllysine" evidence="2">
    <location>
        <position position="306"/>
    </location>
</feature>
<feature type="modified residue" description="5-glutamyl glycerylphosphorylethanolamine" evidence="1">
    <location>
        <position position="362"/>
    </location>
</feature>
<feature type="modified residue" description="N6,N6,N6-trimethyllysine" evidence="2">
    <location>
        <position position="396"/>
    </location>
</feature>
<sequence>MGKEKVHINIVVIGHVDSGKSTTTGHLIYKLGGIDKRVIERFEKEAAEMNKRSFKYAWVLDKLKAERERGITIDIALWKFETNKYYCTVIDAPGHRDFIKNMITGTSQADCAVLIIDPTTGGFEAGISKDGQTREHALLAFTLGVKQMICCCNKMDATTPKYSKARYDEIVKEVSSYLKKVGYNPEKIAFVPISGFEGDNMIERSTNLDWYKGPTLLDALDQINEPKRPSDKPLRLPLQDVYKIGGIGTVPVGRVETGTIKPGMVVTFGPSGLTTEVKSVEMHHESLLEALPGDNVGFNVKNVSVKDLKRGYVASNSKDDPAKGAASFTSQVIIMNHPGQIGNGYAPVLDCHTSHIAVKFAELLTKIDRRSGKELEKEPKFLKNGDAGMVKMLPTKPMVVETFAEYPPLGRFAVRVMRQTVAVGVIKAVEKKDPTGAKVTKAAAKKGAK</sequence>
<accession>P29521</accession>
<dbReference type="EMBL" id="X60302">
    <property type="protein sequence ID" value="CAA42843.1"/>
    <property type="molecule type" value="Genomic_DNA"/>
</dbReference>
<dbReference type="PIR" id="S21989">
    <property type="entry name" value="S21989"/>
</dbReference>
<dbReference type="SMR" id="P29521"/>
<dbReference type="GO" id="GO:0005737">
    <property type="term" value="C:cytoplasm"/>
    <property type="evidence" value="ECO:0007669"/>
    <property type="project" value="UniProtKB-SubCell"/>
</dbReference>
<dbReference type="GO" id="GO:0005525">
    <property type="term" value="F:GTP binding"/>
    <property type="evidence" value="ECO:0007669"/>
    <property type="project" value="UniProtKB-KW"/>
</dbReference>
<dbReference type="GO" id="GO:0003924">
    <property type="term" value="F:GTPase activity"/>
    <property type="evidence" value="ECO:0007669"/>
    <property type="project" value="InterPro"/>
</dbReference>
<dbReference type="GO" id="GO:0003746">
    <property type="term" value="F:translation elongation factor activity"/>
    <property type="evidence" value="ECO:0007669"/>
    <property type="project" value="UniProtKB-KW"/>
</dbReference>
<dbReference type="CDD" id="cd01883">
    <property type="entry name" value="EF1_alpha"/>
    <property type="match status" value="1"/>
</dbReference>
<dbReference type="CDD" id="cd03693">
    <property type="entry name" value="EF1_alpha_II"/>
    <property type="match status" value="1"/>
</dbReference>
<dbReference type="CDD" id="cd03705">
    <property type="entry name" value="EF1_alpha_III"/>
    <property type="match status" value="1"/>
</dbReference>
<dbReference type="FunFam" id="2.40.30.10:FF:000003">
    <property type="entry name" value="Elongation factor 1-alpha"/>
    <property type="match status" value="1"/>
</dbReference>
<dbReference type="FunFam" id="2.40.30.10:FF:000005">
    <property type="entry name" value="Elongation factor 1-alpha"/>
    <property type="match status" value="1"/>
</dbReference>
<dbReference type="FunFam" id="3.40.50.300:FF:000255">
    <property type="entry name" value="Elongation factor 1-alpha"/>
    <property type="match status" value="1"/>
</dbReference>
<dbReference type="Gene3D" id="3.40.50.300">
    <property type="entry name" value="P-loop containing nucleotide triphosphate hydrolases"/>
    <property type="match status" value="1"/>
</dbReference>
<dbReference type="Gene3D" id="2.40.30.10">
    <property type="entry name" value="Translation factors"/>
    <property type="match status" value="2"/>
</dbReference>
<dbReference type="HAMAP" id="MF_00118_A">
    <property type="entry name" value="EF_Tu_A"/>
    <property type="match status" value="1"/>
</dbReference>
<dbReference type="InterPro" id="IPR004161">
    <property type="entry name" value="EFTu-like_2"/>
</dbReference>
<dbReference type="InterPro" id="IPR031157">
    <property type="entry name" value="G_TR_CS"/>
</dbReference>
<dbReference type="InterPro" id="IPR054696">
    <property type="entry name" value="GTP-eEF1A_C"/>
</dbReference>
<dbReference type="InterPro" id="IPR027417">
    <property type="entry name" value="P-loop_NTPase"/>
</dbReference>
<dbReference type="InterPro" id="IPR000795">
    <property type="entry name" value="T_Tr_GTP-bd_dom"/>
</dbReference>
<dbReference type="InterPro" id="IPR050100">
    <property type="entry name" value="TRAFAC_GTPase_members"/>
</dbReference>
<dbReference type="InterPro" id="IPR009000">
    <property type="entry name" value="Transl_B-barrel_sf"/>
</dbReference>
<dbReference type="InterPro" id="IPR009001">
    <property type="entry name" value="Transl_elong_EF1A/Init_IF2_C"/>
</dbReference>
<dbReference type="InterPro" id="IPR004539">
    <property type="entry name" value="Transl_elong_EF1A_euk/arc"/>
</dbReference>
<dbReference type="NCBIfam" id="TIGR00483">
    <property type="entry name" value="EF-1_alpha"/>
    <property type="match status" value="1"/>
</dbReference>
<dbReference type="NCBIfam" id="NF008969">
    <property type="entry name" value="PRK12317.1"/>
    <property type="match status" value="1"/>
</dbReference>
<dbReference type="PANTHER" id="PTHR23115">
    <property type="entry name" value="TRANSLATION FACTOR"/>
    <property type="match status" value="1"/>
</dbReference>
<dbReference type="Pfam" id="PF22594">
    <property type="entry name" value="GTP-eEF1A_C"/>
    <property type="match status" value="1"/>
</dbReference>
<dbReference type="Pfam" id="PF00009">
    <property type="entry name" value="GTP_EFTU"/>
    <property type="match status" value="1"/>
</dbReference>
<dbReference type="Pfam" id="PF03144">
    <property type="entry name" value="GTP_EFTU_D2"/>
    <property type="match status" value="1"/>
</dbReference>
<dbReference type="PRINTS" id="PR00315">
    <property type="entry name" value="ELONGATNFCT"/>
</dbReference>
<dbReference type="SUPFAM" id="SSF50465">
    <property type="entry name" value="EF-Tu/eEF-1alpha/eIF2-gamma C-terminal domain"/>
    <property type="match status" value="1"/>
</dbReference>
<dbReference type="SUPFAM" id="SSF52540">
    <property type="entry name" value="P-loop containing nucleoside triphosphate hydrolases"/>
    <property type="match status" value="1"/>
</dbReference>
<dbReference type="SUPFAM" id="SSF50447">
    <property type="entry name" value="Translation proteins"/>
    <property type="match status" value="1"/>
</dbReference>
<dbReference type="PROSITE" id="PS00301">
    <property type="entry name" value="G_TR_1"/>
    <property type="match status" value="1"/>
</dbReference>
<dbReference type="PROSITE" id="PS51722">
    <property type="entry name" value="G_TR_2"/>
    <property type="match status" value="1"/>
</dbReference>